<comment type="function">
    <text evidence="1">Involved in resistance toward heavy metals.</text>
</comment>
<comment type="cofactor">
    <cofactor evidence="1">
        <name>Cu cation</name>
        <dbReference type="ChEBI" id="CHEBI:23378"/>
    </cofactor>
    <text evidence="1">Binds 1 copper ion per subunit.</text>
</comment>
<comment type="subunit">
    <text evidence="1">Homotrimer.</text>
</comment>
<comment type="subcellular location">
    <subcellularLocation>
        <location evidence="1">Cytoplasm</location>
    </subcellularLocation>
</comment>
<comment type="similarity">
    <text evidence="1">Belongs to the CutA family.</text>
</comment>
<feature type="chain" id="PRO_0000157120" description="Divalent-cation tolerance protein CutA">
    <location>
        <begin position="1"/>
        <end position="112"/>
    </location>
</feature>
<feature type="binding site" evidence="1">
    <location>
        <position position="16"/>
    </location>
    <ligand>
        <name>Cu cation</name>
        <dbReference type="ChEBI" id="CHEBI:23378"/>
    </ligand>
</feature>
<feature type="binding site" evidence="1">
    <location>
        <position position="83"/>
    </location>
    <ligand>
        <name>Cu cation</name>
        <dbReference type="ChEBI" id="CHEBI:23378"/>
    </ligand>
</feature>
<feature type="binding site" evidence="1">
    <location>
        <position position="84"/>
    </location>
    <ligand>
        <name>Cu cation</name>
        <dbReference type="ChEBI" id="CHEBI:23378"/>
    </ligand>
</feature>
<dbReference type="EMBL" id="AE005174">
    <property type="protein sequence ID" value="AAG59336.1"/>
    <property type="molecule type" value="Genomic_DNA"/>
</dbReference>
<dbReference type="EMBL" id="BA000007">
    <property type="protein sequence ID" value="BAB38541.1"/>
    <property type="molecule type" value="Genomic_DNA"/>
</dbReference>
<dbReference type="PIR" id="D86109">
    <property type="entry name" value="D86109"/>
</dbReference>
<dbReference type="PIR" id="F91268">
    <property type="entry name" value="F91268"/>
</dbReference>
<dbReference type="RefSeq" id="NP_313145.1">
    <property type="nucleotide sequence ID" value="NC_002695.1"/>
</dbReference>
<dbReference type="RefSeq" id="WP_000883400.1">
    <property type="nucleotide sequence ID" value="NZ_VOAI01000008.1"/>
</dbReference>
<dbReference type="SMR" id="P69489"/>
<dbReference type="STRING" id="155864.Z5742"/>
<dbReference type="GeneID" id="914138"/>
<dbReference type="GeneID" id="93777687"/>
<dbReference type="KEGG" id="ece:Z5742"/>
<dbReference type="KEGG" id="ecs:ECs_5118"/>
<dbReference type="PATRIC" id="fig|386585.9.peg.5349"/>
<dbReference type="eggNOG" id="COG1324">
    <property type="taxonomic scope" value="Bacteria"/>
</dbReference>
<dbReference type="HOGENOM" id="CLU_098807_3_0_6"/>
<dbReference type="OMA" id="VYTTFPD"/>
<dbReference type="Proteomes" id="UP000000558">
    <property type="component" value="Chromosome"/>
</dbReference>
<dbReference type="Proteomes" id="UP000002519">
    <property type="component" value="Chromosome"/>
</dbReference>
<dbReference type="GO" id="GO:0005737">
    <property type="term" value="C:cytoplasm"/>
    <property type="evidence" value="ECO:0007669"/>
    <property type="project" value="UniProtKB-SubCell"/>
</dbReference>
<dbReference type="GO" id="GO:0005507">
    <property type="term" value="F:copper ion binding"/>
    <property type="evidence" value="ECO:0007669"/>
    <property type="project" value="UniProtKB-UniRule"/>
</dbReference>
<dbReference type="GO" id="GO:0010038">
    <property type="term" value="P:response to metal ion"/>
    <property type="evidence" value="ECO:0007669"/>
    <property type="project" value="InterPro"/>
</dbReference>
<dbReference type="FunFam" id="3.30.70.120:FF:000004">
    <property type="entry name" value="Divalent-cation tolerance protein CutA"/>
    <property type="match status" value="1"/>
</dbReference>
<dbReference type="Gene3D" id="3.30.70.120">
    <property type="match status" value="1"/>
</dbReference>
<dbReference type="HAMAP" id="MF_01160">
    <property type="entry name" value="CutA"/>
    <property type="match status" value="1"/>
</dbReference>
<dbReference type="InterPro" id="IPR023700">
    <property type="entry name" value="CutA_Enterobact"/>
</dbReference>
<dbReference type="InterPro" id="IPR004323">
    <property type="entry name" value="Ion_tolerance_CutA"/>
</dbReference>
<dbReference type="InterPro" id="IPR011322">
    <property type="entry name" value="N-reg_PII-like_a/b"/>
</dbReference>
<dbReference type="InterPro" id="IPR015867">
    <property type="entry name" value="N-reg_PII/ATP_PRibTrfase_C"/>
</dbReference>
<dbReference type="NCBIfam" id="NF007930">
    <property type="entry name" value="PRK10645.1"/>
    <property type="match status" value="1"/>
</dbReference>
<dbReference type="PANTHER" id="PTHR23419">
    <property type="entry name" value="DIVALENT CATION TOLERANCE CUTA-RELATED"/>
    <property type="match status" value="1"/>
</dbReference>
<dbReference type="PANTHER" id="PTHR23419:SF8">
    <property type="entry name" value="FI09726P"/>
    <property type="match status" value="1"/>
</dbReference>
<dbReference type="Pfam" id="PF03091">
    <property type="entry name" value="CutA1"/>
    <property type="match status" value="1"/>
</dbReference>
<dbReference type="SUPFAM" id="SSF54913">
    <property type="entry name" value="GlnB-like"/>
    <property type="match status" value="1"/>
</dbReference>
<protein>
    <recommendedName>
        <fullName evidence="1">Divalent-cation tolerance protein CutA</fullName>
    </recommendedName>
</protein>
<reference key="1">
    <citation type="journal article" date="2001" name="Nature">
        <title>Genome sequence of enterohaemorrhagic Escherichia coli O157:H7.</title>
        <authorList>
            <person name="Perna N.T."/>
            <person name="Plunkett G. III"/>
            <person name="Burland V."/>
            <person name="Mau B."/>
            <person name="Glasner J.D."/>
            <person name="Rose D.J."/>
            <person name="Mayhew G.F."/>
            <person name="Evans P.S."/>
            <person name="Gregor J."/>
            <person name="Kirkpatrick H.A."/>
            <person name="Posfai G."/>
            <person name="Hackett J."/>
            <person name="Klink S."/>
            <person name="Boutin A."/>
            <person name="Shao Y."/>
            <person name="Miller L."/>
            <person name="Grotbeck E.J."/>
            <person name="Davis N.W."/>
            <person name="Lim A."/>
            <person name="Dimalanta E.T."/>
            <person name="Potamousis K."/>
            <person name="Apodaca J."/>
            <person name="Anantharaman T.S."/>
            <person name="Lin J."/>
            <person name="Yen G."/>
            <person name="Schwartz D.C."/>
            <person name="Welch R.A."/>
            <person name="Blattner F.R."/>
        </authorList>
    </citation>
    <scope>NUCLEOTIDE SEQUENCE [LARGE SCALE GENOMIC DNA]</scope>
    <source>
        <strain>O157:H7 / EDL933 / ATCC 700927 / EHEC</strain>
    </source>
</reference>
<reference key="2">
    <citation type="journal article" date="2001" name="DNA Res.">
        <title>Complete genome sequence of enterohemorrhagic Escherichia coli O157:H7 and genomic comparison with a laboratory strain K-12.</title>
        <authorList>
            <person name="Hayashi T."/>
            <person name="Makino K."/>
            <person name="Ohnishi M."/>
            <person name="Kurokawa K."/>
            <person name="Ishii K."/>
            <person name="Yokoyama K."/>
            <person name="Han C.-G."/>
            <person name="Ohtsubo E."/>
            <person name="Nakayama K."/>
            <person name="Murata T."/>
            <person name="Tanaka M."/>
            <person name="Tobe T."/>
            <person name="Iida T."/>
            <person name="Takami H."/>
            <person name="Honda T."/>
            <person name="Sasakawa C."/>
            <person name="Ogasawara N."/>
            <person name="Yasunaga T."/>
            <person name="Kuhara S."/>
            <person name="Shiba T."/>
            <person name="Hattori M."/>
            <person name="Shinagawa H."/>
        </authorList>
    </citation>
    <scope>NUCLEOTIDE SEQUENCE [LARGE SCALE GENOMIC DNA]</scope>
    <source>
        <strain>O157:H7 / Sakai / RIMD 0509952 / EHEC</strain>
    </source>
</reference>
<name>CUTA_ECO57</name>
<evidence type="ECO:0000255" key="1">
    <source>
        <dbReference type="HAMAP-Rule" id="MF_01160"/>
    </source>
</evidence>
<organism>
    <name type="scientific">Escherichia coli O157:H7</name>
    <dbReference type="NCBI Taxonomy" id="83334"/>
    <lineage>
        <taxon>Bacteria</taxon>
        <taxon>Pseudomonadati</taxon>
        <taxon>Pseudomonadota</taxon>
        <taxon>Gammaproteobacteria</taxon>
        <taxon>Enterobacterales</taxon>
        <taxon>Enterobacteriaceae</taxon>
        <taxon>Escherichia</taxon>
    </lineage>
</organism>
<sequence length="112" mass="12331">MLDEKSSNTASVVVLCTAPDEATAQDLAAKVLAEKLAACATLIPGATSLYYWEGKLEQEYEVQMILKTTVSHQQALLECLKSHHPYQTPELLVLPVTHGDTDYLSWLNASLR</sequence>
<keyword id="KW-0186">Copper</keyword>
<keyword id="KW-0963">Cytoplasm</keyword>
<keyword id="KW-0479">Metal-binding</keyword>
<keyword id="KW-1185">Reference proteome</keyword>
<proteinExistence type="inferred from homology"/>
<accession>P69489</accession>
<accession>P36654</accession>
<gene>
    <name evidence="1" type="primary">cutA</name>
    <name type="ordered locus">Z5742</name>
    <name type="ordered locus">ECs5118</name>
</gene>